<accession>Q9EQX6</accession>
<accession>Q8K429</accession>
<gene>
    <name type="primary">Pdgfc</name>
    <name type="synonym">Scdgf</name>
</gene>
<organism>
    <name type="scientific">Rattus norvegicus</name>
    <name type="common">Rat</name>
    <dbReference type="NCBI Taxonomy" id="10116"/>
    <lineage>
        <taxon>Eukaryota</taxon>
        <taxon>Metazoa</taxon>
        <taxon>Chordata</taxon>
        <taxon>Craniata</taxon>
        <taxon>Vertebrata</taxon>
        <taxon>Euteleostomi</taxon>
        <taxon>Mammalia</taxon>
        <taxon>Eutheria</taxon>
        <taxon>Euarchontoglires</taxon>
        <taxon>Glires</taxon>
        <taxon>Rodentia</taxon>
        <taxon>Myomorpha</taxon>
        <taxon>Muroidea</taxon>
        <taxon>Muridae</taxon>
        <taxon>Murinae</taxon>
        <taxon>Rattus</taxon>
    </lineage>
</organism>
<dbReference type="EMBL" id="AB033830">
    <property type="protein sequence ID" value="BAB19969.1"/>
    <property type="molecule type" value="mRNA"/>
</dbReference>
<dbReference type="EMBL" id="AF508348">
    <property type="protein sequence ID" value="AAM47265.1"/>
    <property type="molecule type" value="mRNA"/>
</dbReference>
<dbReference type="RefSeq" id="NP_112607.1">
    <property type="nucleotide sequence ID" value="NM_031317.1"/>
</dbReference>
<dbReference type="SMR" id="Q9EQX6"/>
<dbReference type="FunCoup" id="Q9EQX6">
    <property type="interactions" value="1031"/>
</dbReference>
<dbReference type="STRING" id="10116.ENSRNOP00000015081"/>
<dbReference type="GlyCosmos" id="Q9EQX6">
    <property type="glycosylation" value="2 sites, No reported glycans"/>
</dbReference>
<dbReference type="GlyGen" id="Q9EQX6">
    <property type="glycosylation" value="2 sites"/>
</dbReference>
<dbReference type="PhosphoSitePlus" id="Q9EQX6"/>
<dbReference type="PaxDb" id="10116-ENSRNOP00000015081"/>
<dbReference type="Ensembl" id="ENSRNOT00000015081.5">
    <property type="protein sequence ID" value="ENSRNOP00000015081.3"/>
    <property type="gene ID" value="ENSRNOG00000010695.5"/>
</dbReference>
<dbReference type="GeneID" id="79429"/>
<dbReference type="KEGG" id="rno:79429"/>
<dbReference type="UCSC" id="RGD:68410">
    <property type="organism name" value="rat"/>
</dbReference>
<dbReference type="AGR" id="RGD:68410"/>
<dbReference type="CTD" id="56034"/>
<dbReference type="RGD" id="68410">
    <property type="gene designation" value="Pdgfc"/>
</dbReference>
<dbReference type="eggNOG" id="ENOG502QUUR">
    <property type="taxonomic scope" value="Eukaryota"/>
</dbReference>
<dbReference type="GeneTree" id="ENSGT00940000158645"/>
<dbReference type="HOGENOM" id="CLU_037859_0_0_1"/>
<dbReference type="InParanoid" id="Q9EQX6"/>
<dbReference type="OMA" id="MLIQLTF"/>
<dbReference type="OrthoDB" id="8641091at2759"/>
<dbReference type="PhylomeDB" id="Q9EQX6"/>
<dbReference type="TreeFam" id="TF332130"/>
<dbReference type="Reactome" id="R-RNO-186797">
    <property type="pathway name" value="Signaling by PDGF"/>
</dbReference>
<dbReference type="PRO" id="PR:Q9EQX6"/>
<dbReference type="Proteomes" id="UP000002494">
    <property type="component" value="Chromosome 2"/>
</dbReference>
<dbReference type="Bgee" id="ENSRNOG00000010695">
    <property type="expression patterns" value="Expressed in adult mammalian kidney and 18 other cell types or tissues"/>
</dbReference>
<dbReference type="ExpressionAtlas" id="Q9EQX6">
    <property type="expression patterns" value="baseline and differential"/>
</dbReference>
<dbReference type="GO" id="GO:0009986">
    <property type="term" value="C:cell surface"/>
    <property type="evidence" value="ECO:0000266"/>
    <property type="project" value="RGD"/>
</dbReference>
<dbReference type="GO" id="GO:0005829">
    <property type="term" value="C:cytosol"/>
    <property type="evidence" value="ECO:0007669"/>
    <property type="project" value="UniProtKB-SubCell"/>
</dbReference>
<dbReference type="GO" id="GO:0005576">
    <property type="term" value="C:extracellular region"/>
    <property type="evidence" value="ECO:0000266"/>
    <property type="project" value="RGD"/>
</dbReference>
<dbReference type="GO" id="GO:0005615">
    <property type="term" value="C:extracellular space"/>
    <property type="evidence" value="ECO:0000266"/>
    <property type="project" value="RGD"/>
</dbReference>
<dbReference type="GO" id="GO:0005634">
    <property type="term" value="C:nucleus"/>
    <property type="evidence" value="ECO:0007669"/>
    <property type="project" value="UniProtKB-SubCell"/>
</dbReference>
<dbReference type="GO" id="GO:0005886">
    <property type="term" value="C:plasma membrane"/>
    <property type="evidence" value="ECO:0007669"/>
    <property type="project" value="UniProtKB-SubCell"/>
</dbReference>
<dbReference type="GO" id="GO:0008083">
    <property type="term" value="F:growth factor activity"/>
    <property type="evidence" value="ECO:0007669"/>
    <property type="project" value="UniProtKB-KW"/>
</dbReference>
<dbReference type="GO" id="GO:0005161">
    <property type="term" value="F:platelet-derived growth factor receptor binding"/>
    <property type="evidence" value="ECO:0000266"/>
    <property type="project" value="RGD"/>
</dbReference>
<dbReference type="GO" id="GO:0042803">
    <property type="term" value="F:protein homodimerization activity"/>
    <property type="evidence" value="ECO:0000266"/>
    <property type="project" value="RGD"/>
</dbReference>
<dbReference type="GO" id="GO:0009887">
    <property type="term" value="P:animal organ morphogenesis"/>
    <property type="evidence" value="ECO:0000266"/>
    <property type="project" value="RGD"/>
</dbReference>
<dbReference type="GO" id="GO:0060348">
    <property type="term" value="P:bone development"/>
    <property type="evidence" value="ECO:0000266"/>
    <property type="project" value="RGD"/>
</dbReference>
<dbReference type="GO" id="GO:0071230">
    <property type="term" value="P:cellular response to amino acid stimulus"/>
    <property type="evidence" value="ECO:0000266"/>
    <property type="project" value="RGD"/>
</dbReference>
<dbReference type="GO" id="GO:0048565">
    <property type="term" value="P:digestive tract development"/>
    <property type="evidence" value="ECO:0000266"/>
    <property type="project" value="RGD"/>
</dbReference>
<dbReference type="GO" id="GO:0048144">
    <property type="term" value="P:fibroblast proliferation"/>
    <property type="evidence" value="ECO:0000266"/>
    <property type="project" value="RGD"/>
</dbReference>
<dbReference type="GO" id="GO:0048008">
    <property type="term" value="P:platelet-derived growth factor receptor signaling pathway"/>
    <property type="evidence" value="ECO:0000266"/>
    <property type="project" value="RGD"/>
</dbReference>
<dbReference type="GO" id="GO:0051781">
    <property type="term" value="P:positive regulation of cell division"/>
    <property type="evidence" value="ECO:0007669"/>
    <property type="project" value="UniProtKB-KW"/>
</dbReference>
<dbReference type="GO" id="GO:0030335">
    <property type="term" value="P:positive regulation of cell migration"/>
    <property type="evidence" value="ECO:0000318"/>
    <property type="project" value="GO_Central"/>
</dbReference>
<dbReference type="GO" id="GO:0008284">
    <property type="term" value="P:positive regulation of cell population proliferation"/>
    <property type="evidence" value="ECO:0000266"/>
    <property type="project" value="RGD"/>
</dbReference>
<dbReference type="GO" id="GO:0120162">
    <property type="term" value="P:positive regulation of cold-induced thermogenesis"/>
    <property type="evidence" value="ECO:0000250"/>
    <property type="project" value="YuBioLab"/>
</dbReference>
<dbReference type="GO" id="GO:0070374">
    <property type="term" value="P:positive regulation of ERK1 and ERK2 cascade"/>
    <property type="evidence" value="ECO:0000318"/>
    <property type="project" value="GO_Central"/>
</dbReference>
<dbReference type="GO" id="GO:0048146">
    <property type="term" value="P:positive regulation of fibroblast proliferation"/>
    <property type="evidence" value="ECO:0000266"/>
    <property type="project" value="RGD"/>
</dbReference>
<dbReference type="GO" id="GO:0051897">
    <property type="term" value="P:positive regulation of phosphatidylinositol 3-kinase/protein kinase B signal transduction"/>
    <property type="evidence" value="ECO:0000318"/>
    <property type="project" value="GO_Central"/>
</dbReference>
<dbReference type="CDD" id="cd00041">
    <property type="entry name" value="CUB"/>
    <property type="match status" value="1"/>
</dbReference>
<dbReference type="CDD" id="cd00135">
    <property type="entry name" value="PDGF"/>
    <property type="match status" value="1"/>
</dbReference>
<dbReference type="FunFam" id="2.10.90.10:FF:000010">
    <property type="entry name" value="Platelet derived growth factor C"/>
    <property type="match status" value="1"/>
</dbReference>
<dbReference type="FunFam" id="2.60.120.290:FF:000017">
    <property type="entry name" value="Platelet derived growth factor C"/>
    <property type="match status" value="1"/>
</dbReference>
<dbReference type="Gene3D" id="2.10.90.10">
    <property type="entry name" value="Cystine-knot cytokines"/>
    <property type="match status" value="1"/>
</dbReference>
<dbReference type="Gene3D" id="2.60.120.290">
    <property type="entry name" value="Spermadhesin, CUB domain"/>
    <property type="match status" value="1"/>
</dbReference>
<dbReference type="InterPro" id="IPR000859">
    <property type="entry name" value="CUB_dom"/>
</dbReference>
<dbReference type="InterPro" id="IPR029034">
    <property type="entry name" value="Cystine-knot_cytokine"/>
</dbReference>
<dbReference type="InterPro" id="IPR000072">
    <property type="entry name" value="PDGF/VEGF_dom"/>
</dbReference>
<dbReference type="InterPro" id="IPR035914">
    <property type="entry name" value="Sperma_CUB_dom_sf"/>
</dbReference>
<dbReference type="PANTHER" id="PTHR11633">
    <property type="entry name" value="PLATELET-DERIVED GROWTH FACTOR"/>
    <property type="match status" value="1"/>
</dbReference>
<dbReference type="PANTHER" id="PTHR11633:SF5">
    <property type="entry name" value="PLATELET-DERIVED GROWTH FACTOR C"/>
    <property type="match status" value="1"/>
</dbReference>
<dbReference type="Pfam" id="PF00431">
    <property type="entry name" value="CUB"/>
    <property type="match status" value="1"/>
</dbReference>
<dbReference type="Pfam" id="PF00341">
    <property type="entry name" value="PDGF"/>
    <property type="match status" value="1"/>
</dbReference>
<dbReference type="SMART" id="SM00042">
    <property type="entry name" value="CUB"/>
    <property type="match status" value="1"/>
</dbReference>
<dbReference type="SMART" id="SM00141">
    <property type="entry name" value="PDGF"/>
    <property type="match status" value="1"/>
</dbReference>
<dbReference type="SUPFAM" id="SSF57501">
    <property type="entry name" value="Cystine-knot cytokines"/>
    <property type="match status" value="1"/>
</dbReference>
<dbReference type="SUPFAM" id="SSF49854">
    <property type="entry name" value="Spermadhesin, CUB domain"/>
    <property type="match status" value="1"/>
</dbReference>
<dbReference type="PROSITE" id="PS01180">
    <property type="entry name" value="CUB"/>
    <property type="match status" value="1"/>
</dbReference>
<dbReference type="PROSITE" id="PS50278">
    <property type="entry name" value="PDGF_2"/>
    <property type="match status" value="1"/>
</dbReference>
<name>PDGFC_RAT</name>
<evidence type="ECO:0000250" key="1"/>
<evidence type="ECO:0000250" key="2">
    <source>
        <dbReference type="UniProtKB" id="Q9NRA1"/>
    </source>
</evidence>
<evidence type="ECO:0000255" key="3"/>
<evidence type="ECO:0000255" key="4">
    <source>
        <dbReference type="PROSITE-ProRule" id="PRU00059"/>
    </source>
</evidence>
<evidence type="ECO:0000256" key="5">
    <source>
        <dbReference type="SAM" id="MobiDB-lite"/>
    </source>
</evidence>
<evidence type="ECO:0000269" key="6">
    <source>
    </source>
</evidence>
<evidence type="ECO:0000269" key="7">
    <source>
    </source>
</evidence>
<evidence type="ECO:0000269" key="8">
    <source>
    </source>
</evidence>
<evidence type="ECO:0000269" key="9">
    <source>
    </source>
</evidence>
<evidence type="ECO:0000269" key="10">
    <source>
    </source>
</evidence>
<evidence type="ECO:0000269" key="11">
    <source>
    </source>
</evidence>
<evidence type="ECO:0000305" key="12"/>
<reference key="1">
    <citation type="journal article" date="2001" name="Biochem. Biophys. Res. Commun.">
        <title>Molecular cloning of SCDGF-B, a novel growth factor homologous to SCDGF/PDGF-C/fallotein.</title>
        <authorList>
            <person name="Hamada T."/>
            <person name="Ui-Tei K."/>
            <person name="Imaki J."/>
            <person name="Miyata Y."/>
        </authorList>
    </citation>
    <scope>NUCLEOTIDE SEQUENCE [MRNA]</scope>
    <source>
        <strain>Wistar</strain>
        <tissue>Kidney</tissue>
    </source>
</reference>
<reference key="2">
    <citation type="submission" date="2002-05" db="EMBL/GenBank/DDBJ databases">
        <title>Platelet derived growth factor C (PDGF-C) expression in wound healing.</title>
        <authorList>
            <person name="Brown S.A."/>
            <person name="Coberly D.M."/>
            <person name="Rohrich R.R."/>
            <person name="Chao J.J."/>
        </authorList>
    </citation>
    <scope>NUCLEOTIDE SEQUENCE [MRNA] OF 42-299</scope>
    <source>
        <strain>Sprague-Dawley</strain>
        <tissue>Skin</tissue>
    </source>
</reference>
<reference key="3">
    <citation type="journal article" date="2002" name="J. Am. Soc. Nephrol.">
        <title>Expression of a novel PDGF isoform, PDGF-C, in normal and diseased rat kidney.</title>
        <authorList>
            <person name="Eitner F."/>
            <person name="Ostendorf T."/>
            <person name="Van Roeyen C."/>
            <person name="Kitahara M."/>
            <person name="Li X."/>
            <person name="Aase K."/>
            <person name="Grone H.J."/>
            <person name="Eriksson U."/>
            <person name="Floege J."/>
        </authorList>
    </citation>
    <scope>TISSUE SPECIFICITY</scope>
    <scope>INDUCTION</scope>
</reference>
<reference key="4">
    <citation type="journal article" date="2002" name="Mech. Dev.">
        <title>The expression of SCDGF/PDGF-C/fallotein and SCDGF-B/PDGF-D in the rat central nervous system.</title>
        <authorList>
            <person name="Hamada T."/>
            <person name="Ui-Tei K."/>
            <person name="Imaki J."/>
            <person name="Takahashi F."/>
            <person name="Onodera H."/>
            <person name="Mishima T."/>
            <person name="Miyata Y."/>
        </authorList>
    </citation>
    <scope>TISSUE SPECIFICITY</scope>
    <scope>DEVELOPMENTAL STAGE</scope>
</reference>
<reference key="5">
    <citation type="journal article" date="2004" name="Acta Oto-Laryngol.">
        <title>Expression of platelet-derived growth factor in the developing cochlea of rats.</title>
        <authorList>
            <person name="Lee Y.W."/>
            <person name="Ozeki M."/>
            <person name="Juhn S.K."/>
            <person name="Lin J."/>
        </authorList>
    </citation>
    <scope>DEVELOPMENTAL STAGE</scope>
</reference>
<reference key="6">
    <citation type="journal article" date="2005" name="Cytokine">
        <title>Expression patterns of PDGF-A, -B, -C and -D and the PDGF-receptors alpha and beta in activated rat hepatic stellate cells (HSC).</title>
        <authorList>
            <person name="Breitkopf K."/>
            <person name="Roeyen C."/>
            <person name="Sawitza I."/>
            <person name="Wickert L."/>
            <person name="Floege J."/>
            <person name="Gressner A.M."/>
        </authorList>
    </citation>
    <scope>INDUCTION BY FIBROGENESIS</scope>
</reference>
<reference key="7">
    <citation type="journal article" date="2006" name="Kidney Int.">
        <title>Indoxyl sulfate stimulates proliferation of rat vascular smooth muscle cells.</title>
        <authorList>
            <person name="Yamamoto H."/>
            <person name="Tsuruoka S."/>
            <person name="Ioka T."/>
            <person name="Ando H."/>
            <person name="Ito C."/>
            <person name="Akimoto T."/>
            <person name="Fujimura A."/>
            <person name="Asano Y."/>
            <person name="Kusano E."/>
        </authorList>
    </citation>
    <scope>INDUCTION BY INDOXYL SULFATE</scope>
</reference>
<reference key="8">
    <citation type="journal article" date="2008" name="Nucleic Acids Res.">
        <title>Angiotensin II induction of PDGF-C expression is mediated by AT1 receptor-dependent Egr-1 transactivation.</title>
        <authorList>
            <person name="Sanchez-Guerrero E."/>
            <person name="Midgley V.C."/>
            <person name="Khachigian L.M."/>
        </authorList>
    </citation>
    <scope>DEVELOPMENTAL STAGE</scope>
</reference>
<protein>
    <recommendedName>
        <fullName>Platelet-derived growth factor C</fullName>
        <shortName>PDGF-C</shortName>
    </recommendedName>
    <alternativeName>
        <fullName>Fallotein</fullName>
    </alternativeName>
    <alternativeName>
        <fullName>Spinal cord-derived growth factor</fullName>
        <shortName>rScdfg</shortName>
    </alternativeName>
    <alternativeName>
        <fullName>VEGF-E</fullName>
    </alternativeName>
    <component>
        <recommendedName>
            <fullName>Platelet-derived growth factor C, latent form</fullName>
            <shortName>PDGFC latent form</shortName>
        </recommendedName>
    </component>
    <component>
        <recommendedName>
            <fullName>Platelet-derived growth factor C, receptor-binding form</fullName>
            <shortName>PDGFC receptor-binding form</shortName>
        </recommendedName>
    </component>
</protein>
<sequence length="345" mass="38734">MLLLGLLLLTSALAGQRTGTRAESNLSSKLQLSSDKEQNGVQDPRHERVVTISGNGSIHSPKFPHTYPRNTVLVWRLVAVDENVRIQLTFDERFGLEDPEDDLCKYDFVEVEEPSDGSVLGRWCGSGTVPGKQTSKGNHIRIRFVSDEYFPSEPGFCIHYSIIMPQVTETTSPSVLPPSALSLDLLNNAVTAFSTVEELIRFLEPDRWQIDLDSLYKPTWPLLGKAFLYGKKSKAVNLNLLKEEVKLYSCTPRNFSVSIREELKRTDTIFWPGCLLVKRCGGNCACCLHNCNECQCVPRKVTKKYHEVLQLRPKIGVKGLHKSLTDVALEHHEECDCVCRGNTEG</sequence>
<keyword id="KW-1003">Cell membrane</keyword>
<keyword id="KW-0165">Cleavage on pair of basic residues</keyword>
<keyword id="KW-0963">Cytoplasm</keyword>
<keyword id="KW-0217">Developmental protein</keyword>
<keyword id="KW-1015">Disulfide bond</keyword>
<keyword id="KW-0325">Glycoprotein</keyword>
<keyword id="KW-0339">Growth factor</keyword>
<keyword id="KW-0472">Membrane</keyword>
<keyword id="KW-0497">Mitogen</keyword>
<keyword id="KW-0539">Nucleus</keyword>
<keyword id="KW-1185">Reference proteome</keyword>
<keyword id="KW-0964">Secreted</keyword>
<keyword id="KW-0732">Signal</keyword>
<keyword id="KW-0832">Ubl conjugation</keyword>
<comment type="function">
    <text evidence="1">Growth factor that plays an essential role in the regulation of embryonic development, cell proliferation, cell migration, survival and chemotaxis. Potent mitogen and chemoattractant for cells of mesenchymal origin. Required for normal skeleton formation during embryonic development, especially for normal development of the craniofacial skeleton and for normal development of the palate. Required for normal skin morphogenesis during embryonic development. Plays an important role in wound healing, where it appears to be involved in three stages: inflammation, proliferation and remodeling. Plays an important role in angiogenesis and blood vessel development. Involved in fibrotic processes, in which transformation of interstitial fibroblasts into myofibroblasts plus collagen deposition occurs. The CUB domain has mitogenic activity in coronary artery smooth muscle cells, suggesting a role beyond the maintenance of the latency of the PDGF domain. In the nucleus, PDGFC seems to have additional function (By similarity).</text>
</comment>
<comment type="subunit">
    <text evidence="1">Homodimer; disulfide-linked. Interacts with PDGFRA homodimers, and with heterodimers formed by PDGFRA and PDGFRB. Interacts (via CUB domain) with PLAT (via kringle domain) (By similarity).</text>
</comment>
<comment type="subcellular location">
    <subcellularLocation>
        <location evidence="2">Cytoplasm</location>
        <location evidence="2">Cytosol</location>
    </subcellularLocation>
    <subcellularLocation>
        <location evidence="2">Secreted</location>
    </subcellularLocation>
    <subcellularLocation>
        <location evidence="2">Nucleus</location>
    </subcellularLocation>
    <subcellularLocation>
        <location evidence="2">Cytoplasmic granule</location>
    </subcellularLocation>
    <subcellularLocation>
        <location evidence="2">Cell membrane</location>
    </subcellularLocation>
    <text evidence="2">Sumoylated form is predominant in the nucleus. Stored in alpha granules in platelets.</text>
</comment>
<comment type="tissue specificity">
    <text evidence="6 7">Highly expressed in the kidney and adrenal gland. In the kidney, it is expressed in arteriolar smooth muscle cells and in epithelial cells of individual segments (at protein level).</text>
</comment>
<comment type="developmental stage">
    <text evidence="6 8 11">Expressed in the floor plate of the spinal cord at 11 dpc and also in the ventricular zone at 16 dpc, but not in adult. In the brain, expression is more significant at 16 dpc than at adult, with high expression in the cortex, pontine area and choroid plexus. Detected in the otocyst at 16 dpc.</text>
</comment>
<comment type="induction">
    <text evidence="7 9 10">Up-regulated in mesangial, visceral epithelial, and interstitial cells after predominant injury to these cells. Expression levels increase in hepatic cells undergoing in vitro transdifferentiation, which represents a model for hepatic fibrogenesis. Expression induced by indoxyl sulfate. Expression induced by angiotensin-2 via EGR1 in smooth muscle cells in neonatal but not in adult rats.</text>
</comment>
<comment type="PTM">
    <text evidence="1">Proteolytic removal of the N-terminal CUB domain releasing the core domain is necessary for unmasking the receptor-binding epitopes of the core domain. Cleavage after basic residues in the hinge region (region connecting the CUB and growth factor domains) gives rise to the receptor-binding form. Cleaved by PLAT and PLG (By similarity).</text>
</comment>
<comment type="PTM">
    <text evidence="1">Sumoylated with SUMO1.</text>
</comment>
<comment type="PTM">
    <text evidence="1">N-glycosylated.</text>
</comment>
<comment type="similarity">
    <text evidence="12">Belongs to the PDGF/VEGF growth factor family.</text>
</comment>
<feature type="signal peptide" evidence="3">
    <location>
        <begin position="1"/>
        <end position="22"/>
    </location>
</feature>
<feature type="chain" id="PRO_0000343875" description="Platelet-derived growth factor C, latent form">
    <location>
        <begin position="23"/>
        <end position="345"/>
    </location>
</feature>
<feature type="chain" id="PRO_0000343876" description="Platelet-derived growth factor C, receptor-binding form">
    <location>
        <begin status="unknown"/>
        <end position="345"/>
    </location>
</feature>
<feature type="domain" description="CUB" evidence="4">
    <location>
        <begin position="46"/>
        <end position="163"/>
    </location>
</feature>
<feature type="region of interest" description="Disordered" evidence="5">
    <location>
        <begin position="24"/>
        <end position="45"/>
    </location>
</feature>
<feature type="compositionally biased region" description="Polar residues" evidence="5">
    <location>
        <begin position="24"/>
        <end position="33"/>
    </location>
</feature>
<feature type="compositionally biased region" description="Basic and acidic residues" evidence="5">
    <location>
        <begin position="34"/>
        <end position="45"/>
    </location>
</feature>
<feature type="site" description="Cleavage" evidence="1">
    <location>
        <begin position="225"/>
        <end position="226"/>
    </location>
</feature>
<feature type="site" description="Cleavage" evidence="1">
    <location>
        <begin position="231"/>
        <end position="232"/>
    </location>
</feature>
<feature type="site" description="Cleavage" evidence="1">
    <location>
        <begin position="234"/>
        <end position="235"/>
    </location>
</feature>
<feature type="glycosylation site" description="N-linked (GlcNAc...) asparagine" evidence="3">
    <location>
        <position position="25"/>
    </location>
</feature>
<feature type="glycosylation site" description="N-linked (GlcNAc...) asparagine" evidence="3">
    <location>
        <position position="55"/>
    </location>
</feature>
<feature type="disulfide bond" evidence="4">
    <location>
        <begin position="104"/>
        <end position="124"/>
    </location>
</feature>
<feature type="disulfide bond" evidence="4">
    <location>
        <begin position="250"/>
        <end position="294"/>
    </location>
</feature>
<feature type="disulfide bond" description="Interchain (with C-286)" evidence="4">
    <location>
        <position position="274"/>
    </location>
</feature>
<feature type="disulfide bond" evidence="4">
    <location>
        <begin position="280"/>
        <end position="335"/>
    </location>
</feature>
<feature type="disulfide bond" description="Interchain (with C-274)" evidence="4">
    <location>
        <position position="286"/>
    </location>
</feature>
<feature type="disulfide bond" evidence="4">
    <location>
        <begin position="287"/>
        <end position="337"/>
    </location>
</feature>
<proteinExistence type="evidence at protein level"/>